<protein>
    <recommendedName>
        <fullName evidence="1">tRNA-cytidine(32) 2-sulfurtransferase</fullName>
        <ecNumber evidence="1">2.8.1.-</ecNumber>
    </recommendedName>
    <alternativeName>
        <fullName evidence="1">Two-thiocytidine biosynthesis protein A</fullName>
    </alternativeName>
    <alternativeName>
        <fullName evidence="1">tRNA 2-thiocytidine biosynthesis protein TtcA</fullName>
    </alternativeName>
</protein>
<name>TTCA_XYLF2</name>
<proteinExistence type="inferred from homology"/>
<keyword id="KW-0004">4Fe-4S</keyword>
<keyword id="KW-0067">ATP-binding</keyword>
<keyword id="KW-0963">Cytoplasm</keyword>
<keyword id="KW-0408">Iron</keyword>
<keyword id="KW-0411">Iron-sulfur</keyword>
<keyword id="KW-0460">Magnesium</keyword>
<keyword id="KW-0479">Metal-binding</keyword>
<keyword id="KW-0547">Nucleotide-binding</keyword>
<keyword id="KW-0694">RNA-binding</keyword>
<keyword id="KW-0808">Transferase</keyword>
<keyword id="KW-0819">tRNA processing</keyword>
<keyword id="KW-0820">tRNA-binding</keyword>
<feature type="chain" id="PRO_0000348878" description="tRNA-cytidine(32) 2-sulfurtransferase">
    <location>
        <begin position="1"/>
        <end position="299"/>
    </location>
</feature>
<feature type="short sequence motif" description="PP-loop motif" evidence="1">
    <location>
        <begin position="56"/>
        <end position="61"/>
    </location>
</feature>
<feature type="binding site" evidence="1">
    <location>
        <position position="131"/>
    </location>
    <ligand>
        <name>[4Fe-4S] cluster</name>
        <dbReference type="ChEBI" id="CHEBI:49883"/>
    </ligand>
</feature>
<feature type="binding site" evidence="1">
    <location>
        <position position="134"/>
    </location>
    <ligand>
        <name>[4Fe-4S] cluster</name>
        <dbReference type="ChEBI" id="CHEBI:49883"/>
    </ligand>
</feature>
<feature type="binding site" evidence="1">
    <location>
        <position position="222"/>
    </location>
    <ligand>
        <name>[4Fe-4S] cluster</name>
        <dbReference type="ChEBI" id="CHEBI:49883"/>
    </ligand>
</feature>
<accession>B2I7H1</accession>
<evidence type="ECO:0000255" key="1">
    <source>
        <dbReference type="HAMAP-Rule" id="MF_01850"/>
    </source>
</evidence>
<gene>
    <name evidence="1" type="primary">ttcA</name>
    <name type="ordered locus">XfasM23_1661</name>
</gene>
<organism>
    <name type="scientific">Xylella fastidiosa (strain M23)</name>
    <dbReference type="NCBI Taxonomy" id="405441"/>
    <lineage>
        <taxon>Bacteria</taxon>
        <taxon>Pseudomonadati</taxon>
        <taxon>Pseudomonadota</taxon>
        <taxon>Gammaproteobacteria</taxon>
        <taxon>Lysobacterales</taxon>
        <taxon>Lysobacteraceae</taxon>
        <taxon>Xylella</taxon>
    </lineage>
</organism>
<sequence>MDATFPSQHNITARPAPGRIRREQCKLAKRLRRQVGQAIADFGMIEANDKIMVCLSGGKDSYTLLDMLLQLRAKAPVPFELTAVNLDQKQPGFPKHVLPEYLSSIGVPYHIIEQDTYSVVTRVVPEGKTLCALCSRMRRGALYAYAETQGFTKIALGHHRDDMVATFFMNLFHHAKLSGMPPKLRSDNGKHVVIRPLAYVSETDIIAYADAREFPIIPCNLCGSQENLQRKQVGVMLKAWEKEYPGRIEQIARALGNIRPSQLADQSLFDFLALGRHSNTPLPNAHAWLAGDLANDTAP</sequence>
<comment type="function">
    <text evidence="1">Catalyzes the ATP-dependent 2-thiolation of cytidine in position 32 of tRNA, to form 2-thiocytidine (s(2)C32). The sulfur atoms are provided by the cysteine/cysteine desulfurase (IscS) system.</text>
</comment>
<comment type="catalytic activity">
    <reaction evidence="1">
        <text>cytidine(32) in tRNA + S-sulfanyl-L-cysteinyl-[cysteine desulfurase] + AH2 + ATP = 2-thiocytidine(32) in tRNA + L-cysteinyl-[cysteine desulfurase] + A + AMP + diphosphate + H(+)</text>
        <dbReference type="Rhea" id="RHEA:57048"/>
        <dbReference type="Rhea" id="RHEA-COMP:10288"/>
        <dbReference type="Rhea" id="RHEA-COMP:12157"/>
        <dbReference type="Rhea" id="RHEA-COMP:12158"/>
        <dbReference type="Rhea" id="RHEA-COMP:14821"/>
        <dbReference type="ChEBI" id="CHEBI:13193"/>
        <dbReference type="ChEBI" id="CHEBI:15378"/>
        <dbReference type="ChEBI" id="CHEBI:17499"/>
        <dbReference type="ChEBI" id="CHEBI:29950"/>
        <dbReference type="ChEBI" id="CHEBI:30616"/>
        <dbReference type="ChEBI" id="CHEBI:33019"/>
        <dbReference type="ChEBI" id="CHEBI:61963"/>
        <dbReference type="ChEBI" id="CHEBI:82748"/>
        <dbReference type="ChEBI" id="CHEBI:141453"/>
        <dbReference type="ChEBI" id="CHEBI:456215"/>
    </reaction>
    <physiologicalReaction direction="left-to-right" evidence="1">
        <dbReference type="Rhea" id="RHEA:57049"/>
    </physiologicalReaction>
</comment>
<comment type="cofactor">
    <cofactor evidence="1">
        <name>Mg(2+)</name>
        <dbReference type="ChEBI" id="CHEBI:18420"/>
    </cofactor>
</comment>
<comment type="cofactor">
    <cofactor evidence="1">
        <name>[4Fe-4S] cluster</name>
        <dbReference type="ChEBI" id="CHEBI:49883"/>
    </cofactor>
    <text evidence="1">Binds 1 [4Fe-4S] cluster per subunit. The cluster is chelated by three Cys residues, the fourth Fe has a free coordination site that may bind a sulfur atom transferred from the persulfide of IscS.</text>
</comment>
<comment type="pathway">
    <text evidence="1">tRNA modification.</text>
</comment>
<comment type="subunit">
    <text evidence="1">Homodimer.</text>
</comment>
<comment type="subcellular location">
    <subcellularLocation>
        <location evidence="1">Cytoplasm</location>
    </subcellularLocation>
</comment>
<comment type="miscellaneous">
    <text evidence="1">The thiolation reaction likely consists of two steps: a first activation step by ATP to form an adenylated intermediate of the target base of tRNA, and a second nucleophilic substitution step of the sulfur (S) atom supplied by the hydrosulfide attached to the Fe-S cluster.</text>
</comment>
<comment type="similarity">
    <text evidence="1">Belongs to the TtcA family.</text>
</comment>
<dbReference type="EC" id="2.8.1.-" evidence="1"/>
<dbReference type="EMBL" id="CP001011">
    <property type="protein sequence ID" value="ACB93068.1"/>
    <property type="molecule type" value="Genomic_DNA"/>
</dbReference>
<dbReference type="RefSeq" id="WP_004088754.1">
    <property type="nucleotide sequence ID" value="NC_010577.1"/>
</dbReference>
<dbReference type="SMR" id="B2I7H1"/>
<dbReference type="GeneID" id="93905400"/>
<dbReference type="KEGG" id="xfn:XfasM23_1661"/>
<dbReference type="HOGENOM" id="CLU_026481_0_0_6"/>
<dbReference type="Proteomes" id="UP000001698">
    <property type="component" value="Chromosome"/>
</dbReference>
<dbReference type="GO" id="GO:0005737">
    <property type="term" value="C:cytoplasm"/>
    <property type="evidence" value="ECO:0007669"/>
    <property type="project" value="UniProtKB-SubCell"/>
</dbReference>
<dbReference type="GO" id="GO:0051539">
    <property type="term" value="F:4 iron, 4 sulfur cluster binding"/>
    <property type="evidence" value="ECO:0007669"/>
    <property type="project" value="UniProtKB-UniRule"/>
</dbReference>
<dbReference type="GO" id="GO:0005524">
    <property type="term" value="F:ATP binding"/>
    <property type="evidence" value="ECO:0007669"/>
    <property type="project" value="UniProtKB-UniRule"/>
</dbReference>
<dbReference type="GO" id="GO:0000287">
    <property type="term" value="F:magnesium ion binding"/>
    <property type="evidence" value="ECO:0007669"/>
    <property type="project" value="UniProtKB-UniRule"/>
</dbReference>
<dbReference type="GO" id="GO:0016783">
    <property type="term" value="F:sulfurtransferase activity"/>
    <property type="evidence" value="ECO:0007669"/>
    <property type="project" value="UniProtKB-UniRule"/>
</dbReference>
<dbReference type="GO" id="GO:0000049">
    <property type="term" value="F:tRNA binding"/>
    <property type="evidence" value="ECO:0007669"/>
    <property type="project" value="UniProtKB-KW"/>
</dbReference>
<dbReference type="GO" id="GO:0034227">
    <property type="term" value="P:tRNA thio-modification"/>
    <property type="evidence" value="ECO:0007669"/>
    <property type="project" value="UniProtKB-UniRule"/>
</dbReference>
<dbReference type="CDD" id="cd24138">
    <property type="entry name" value="TtcA-like"/>
    <property type="match status" value="1"/>
</dbReference>
<dbReference type="Gene3D" id="3.40.50.620">
    <property type="entry name" value="HUPs"/>
    <property type="match status" value="1"/>
</dbReference>
<dbReference type="HAMAP" id="MF_01850">
    <property type="entry name" value="TtcA"/>
    <property type="match status" value="1"/>
</dbReference>
<dbReference type="InterPro" id="IPR014729">
    <property type="entry name" value="Rossmann-like_a/b/a_fold"/>
</dbReference>
<dbReference type="InterPro" id="IPR011063">
    <property type="entry name" value="TilS/TtcA_N"/>
</dbReference>
<dbReference type="InterPro" id="IPR012089">
    <property type="entry name" value="tRNA_Cyd_32_2_STrfase"/>
</dbReference>
<dbReference type="InterPro" id="IPR035107">
    <property type="entry name" value="tRNA_thiolation_TtcA_Ctu1"/>
</dbReference>
<dbReference type="NCBIfam" id="NF007972">
    <property type="entry name" value="PRK10696.1"/>
    <property type="match status" value="1"/>
</dbReference>
<dbReference type="PANTHER" id="PTHR43686:SF1">
    <property type="entry name" value="AMINOTRAN_5 DOMAIN-CONTAINING PROTEIN"/>
    <property type="match status" value="1"/>
</dbReference>
<dbReference type="PANTHER" id="PTHR43686">
    <property type="entry name" value="SULFURTRANSFERASE-RELATED"/>
    <property type="match status" value="1"/>
</dbReference>
<dbReference type="Pfam" id="PF01171">
    <property type="entry name" value="ATP_bind_3"/>
    <property type="match status" value="1"/>
</dbReference>
<dbReference type="PIRSF" id="PIRSF004976">
    <property type="entry name" value="ATPase_YdaO"/>
    <property type="match status" value="1"/>
</dbReference>
<dbReference type="SUPFAM" id="SSF52402">
    <property type="entry name" value="Adenine nucleotide alpha hydrolases-like"/>
    <property type="match status" value="1"/>
</dbReference>
<reference key="1">
    <citation type="journal article" date="2010" name="J. Bacteriol.">
        <title>Whole genome sequences of two Xylella fastidiosa strains (M12 and M23) causing almond leaf scorch disease in California.</title>
        <authorList>
            <person name="Chen J."/>
            <person name="Xie G."/>
            <person name="Han S."/>
            <person name="Chertkov O."/>
            <person name="Sims D."/>
            <person name="Civerolo E.L."/>
        </authorList>
    </citation>
    <scope>NUCLEOTIDE SEQUENCE [LARGE SCALE GENOMIC DNA]</scope>
    <source>
        <strain>M23</strain>
    </source>
</reference>